<protein>
    <recommendedName>
        <fullName evidence="1">Serine--tRNA ligase</fullName>
        <ecNumber evidence="1">6.1.1.11</ecNumber>
    </recommendedName>
    <alternativeName>
        <fullName evidence="1">Seryl-tRNA synthetase</fullName>
        <shortName evidence="1">SerRS</shortName>
    </alternativeName>
    <alternativeName>
        <fullName evidence="1">Seryl-tRNA(Ser/Sec) synthetase</fullName>
    </alternativeName>
</protein>
<organism>
    <name type="scientific">Nocardioides sp. (strain ATCC BAA-499 / JS614)</name>
    <dbReference type="NCBI Taxonomy" id="196162"/>
    <lineage>
        <taxon>Bacteria</taxon>
        <taxon>Bacillati</taxon>
        <taxon>Actinomycetota</taxon>
        <taxon>Actinomycetes</taxon>
        <taxon>Propionibacteriales</taxon>
        <taxon>Nocardioidaceae</taxon>
        <taxon>Nocardioides</taxon>
    </lineage>
</organism>
<keyword id="KW-0030">Aminoacyl-tRNA synthetase</keyword>
<keyword id="KW-0067">ATP-binding</keyword>
<keyword id="KW-0963">Cytoplasm</keyword>
<keyword id="KW-0436">Ligase</keyword>
<keyword id="KW-0547">Nucleotide-binding</keyword>
<keyword id="KW-0648">Protein biosynthesis</keyword>
<keyword id="KW-1185">Reference proteome</keyword>
<accession>A1SD34</accession>
<dbReference type="EC" id="6.1.1.11" evidence="1"/>
<dbReference type="EMBL" id="CP000509">
    <property type="protein sequence ID" value="ABL79719.1"/>
    <property type="molecule type" value="Genomic_DNA"/>
</dbReference>
<dbReference type="RefSeq" id="WP_011753670.1">
    <property type="nucleotide sequence ID" value="NC_008699.1"/>
</dbReference>
<dbReference type="SMR" id="A1SD34"/>
<dbReference type="STRING" id="196162.Noca_0174"/>
<dbReference type="KEGG" id="nca:Noca_0174"/>
<dbReference type="eggNOG" id="COG0172">
    <property type="taxonomic scope" value="Bacteria"/>
</dbReference>
<dbReference type="HOGENOM" id="CLU_023797_0_1_11"/>
<dbReference type="OrthoDB" id="9804647at2"/>
<dbReference type="UniPathway" id="UPA00906">
    <property type="reaction ID" value="UER00895"/>
</dbReference>
<dbReference type="Proteomes" id="UP000000640">
    <property type="component" value="Chromosome"/>
</dbReference>
<dbReference type="GO" id="GO:0005737">
    <property type="term" value="C:cytoplasm"/>
    <property type="evidence" value="ECO:0007669"/>
    <property type="project" value="UniProtKB-SubCell"/>
</dbReference>
<dbReference type="GO" id="GO:0005524">
    <property type="term" value="F:ATP binding"/>
    <property type="evidence" value="ECO:0007669"/>
    <property type="project" value="UniProtKB-UniRule"/>
</dbReference>
<dbReference type="GO" id="GO:0004828">
    <property type="term" value="F:serine-tRNA ligase activity"/>
    <property type="evidence" value="ECO:0007669"/>
    <property type="project" value="UniProtKB-UniRule"/>
</dbReference>
<dbReference type="GO" id="GO:0016260">
    <property type="term" value="P:selenocysteine biosynthetic process"/>
    <property type="evidence" value="ECO:0007669"/>
    <property type="project" value="UniProtKB-UniRule"/>
</dbReference>
<dbReference type="GO" id="GO:0006434">
    <property type="term" value="P:seryl-tRNA aminoacylation"/>
    <property type="evidence" value="ECO:0007669"/>
    <property type="project" value="UniProtKB-UniRule"/>
</dbReference>
<dbReference type="CDD" id="cd00770">
    <property type="entry name" value="SerRS_core"/>
    <property type="match status" value="1"/>
</dbReference>
<dbReference type="FunFam" id="3.30.930.10:FF:000048">
    <property type="entry name" value="Serine--tRNA ligase"/>
    <property type="match status" value="1"/>
</dbReference>
<dbReference type="Gene3D" id="3.30.930.10">
    <property type="entry name" value="Bira Bifunctional Protein, Domain 2"/>
    <property type="match status" value="1"/>
</dbReference>
<dbReference type="Gene3D" id="1.10.287.40">
    <property type="entry name" value="Serine-tRNA synthetase, tRNA binding domain"/>
    <property type="match status" value="1"/>
</dbReference>
<dbReference type="HAMAP" id="MF_00176">
    <property type="entry name" value="Ser_tRNA_synth_type1"/>
    <property type="match status" value="1"/>
</dbReference>
<dbReference type="InterPro" id="IPR002314">
    <property type="entry name" value="aa-tRNA-synt_IIb"/>
</dbReference>
<dbReference type="InterPro" id="IPR006195">
    <property type="entry name" value="aa-tRNA-synth_II"/>
</dbReference>
<dbReference type="InterPro" id="IPR045864">
    <property type="entry name" value="aa-tRNA-synth_II/BPL/LPL"/>
</dbReference>
<dbReference type="InterPro" id="IPR002317">
    <property type="entry name" value="Ser-tRNA-ligase_type_1"/>
</dbReference>
<dbReference type="InterPro" id="IPR015866">
    <property type="entry name" value="Ser-tRNA-synth_1_N"/>
</dbReference>
<dbReference type="InterPro" id="IPR042103">
    <property type="entry name" value="SerRS_1_N_sf"/>
</dbReference>
<dbReference type="InterPro" id="IPR033729">
    <property type="entry name" value="SerRS_core"/>
</dbReference>
<dbReference type="InterPro" id="IPR010978">
    <property type="entry name" value="tRNA-bd_arm"/>
</dbReference>
<dbReference type="NCBIfam" id="TIGR00414">
    <property type="entry name" value="serS"/>
    <property type="match status" value="1"/>
</dbReference>
<dbReference type="PANTHER" id="PTHR11778">
    <property type="entry name" value="SERYL-TRNA SYNTHETASE"/>
    <property type="match status" value="1"/>
</dbReference>
<dbReference type="Pfam" id="PF02403">
    <property type="entry name" value="Seryl_tRNA_N"/>
    <property type="match status" value="1"/>
</dbReference>
<dbReference type="Pfam" id="PF00587">
    <property type="entry name" value="tRNA-synt_2b"/>
    <property type="match status" value="1"/>
</dbReference>
<dbReference type="PIRSF" id="PIRSF001529">
    <property type="entry name" value="Ser-tRNA-synth_IIa"/>
    <property type="match status" value="1"/>
</dbReference>
<dbReference type="PRINTS" id="PR00981">
    <property type="entry name" value="TRNASYNTHSER"/>
</dbReference>
<dbReference type="SUPFAM" id="SSF55681">
    <property type="entry name" value="Class II aaRS and biotin synthetases"/>
    <property type="match status" value="1"/>
</dbReference>
<dbReference type="SUPFAM" id="SSF46589">
    <property type="entry name" value="tRNA-binding arm"/>
    <property type="match status" value="1"/>
</dbReference>
<dbReference type="PROSITE" id="PS50862">
    <property type="entry name" value="AA_TRNA_LIGASE_II"/>
    <property type="match status" value="1"/>
</dbReference>
<reference key="1">
    <citation type="submission" date="2006-12" db="EMBL/GenBank/DDBJ databases">
        <title>Complete sequence of chromosome 1 of Nocardioides sp. JS614.</title>
        <authorList>
            <person name="Copeland A."/>
            <person name="Lucas S."/>
            <person name="Lapidus A."/>
            <person name="Barry K."/>
            <person name="Detter J.C."/>
            <person name="Glavina del Rio T."/>
            <person name="Hammon N."/>
            <person name="Israni S."/>
            <person name="Dalin E."/>
            <person name="Tice H."/>
            <person name="Pitluck S."/>
            <person name="Thompson L.S."/>
            <person name="Brettin T."/>
            <person name="Bruce D."/>
            <person name="Han C."/>
            <person name="Tapia R."/>
            <person name="Schmutz J."/>
            <person name="Larimer F."/>
            <person name="Land M."/>
            <person name="Hauser L."/>
            <person name="Kyrpides N."/>
            <person name="Kim E."/>
            <person name="Mattes T."/>
            <person name="Gossett J."/>
            <person name="Richardson P."/>
        </authorList>
    </citation>
    <scope>NUCLEOTIDE SEQUENCE [LARGE SCALE GENOMIC DNA]</scope>
    <source>
        <strain>ATCC BAA-499 / JS614</strain>
    </source>
</reference>
<sequence length="424" mass="46697">MIDPRVLRDEPDRVRAAQVKRGLSDEVVDHALSADGERRRAIAAFEAKRAEQKQLGKLIPQAQGEEKQALLAQTKTLAAEVKQAEAAQAVAEEAWQAALMSIPNLAADEAPAGGEDDYVVLEEIGTPRDFAADGFEPRDHIELGRMLGAIDLDRGAKVSGSRFYFLTGAGAELELALVNLAMQQARESGFTPVIAPSMVKPRAMDGTGFLGQAADDVYRIEGQDMYLVGTSEVPMAAYHSDEILDGGALPLRYAAFSPCFRKEAGSHGKDTKGIIRVHWFDKVEMFVYTTTEESYAEHQRLLAWEKEFLEKLELAYRVIDVAAGDLGLSAQRKFDCEAWIPTQGRYRELTSTSNCTEFQTRRLDTRGRFGSEIRPISTLNGTLCAITRTIVAVLETHQQADGSVRVPKALQPWLGREVLEPVTT</sequence>
<proteinExistence type="inferred from homology"/>
<feature type="chain" id="PRO_1000019752" description="Serine--tRNA ligase">
    <location>
        <begin position="1"/>
        <end position="424"/>
    </location>
</feature>
<feature type="binding site" evidence="1">
    <location>
        <begin position="230"/>
        <end position="232"/>
    </location>
    <ligand>
        <name>L-serine</name>
        <dbReference type="ChEBI" id="CHEBI:33384"/>
    </ligand>
</feature>
<feature type="binding site" evidence="1">
    <location>
        <begin position="261"/>
        <end position="263"/>
    </location>
    <ligand>
        <name>ATP</name>
        <dbReference type="ChEBI" id="CHEBI:30616"/>
    </ligand>
</feature>
<feature type="binding site" evidence="1">
    <location>
        <position position="277"/>
    </location>
    <ligand>
        <name>ATP</name>
        <dbReference type="ChEBI" id="CHEBI:30616"/>
    </ligand>
</feature>
<feature type="binding site" evidence="1">
    <location>
        <position position="284"/>
    </location>
    <ligand>
        <name>L-serine</name>
        <dbReference type="ChEBI" id="CHEBI:33384"/>
    </ligand>
</feature>
<feature type="binding site" evidence="1">
    <location>
        <begin position="348"/>
        <end position="351"/>
    </location>
    <ligand>
        <name>ATP</name>
        <dbReference type="ChEBI" id="CHEBI:30616"/>
    </ligand>
</feature>
<feature type="binding site" evidence="1">
    <location>
        <position position="382"/>
    </location>
    <ligand>
        <name>L-serine</name>
        <dbReference type="ChEBI" id="CHEBI:33384"/>
    </ligand>
</feature>
<comment type="function">
    <text evidence="1">Catalyzes the attachment of serine to tRNA(Ser). Is also able to aminoacylate tRNA(Sec) with serine, to form the misacylated tRNA L-seryl-tRNA(Sec), which will be further converted into selenocysteinyl-tRNA(Sec).</text>
</comment>
<comment type="catalytic activity">
    <reaction evidence="1">
        <text>tRNA(Ser) + L-serine + ATP = L-seryl-tRNA(Ser) + AMP + diphosphate + H(+)</text>
        <dbReference type="Rhea" id="RHEA:12292"/>
        <dbReference type="Rhea" id="RHEA-COMP:9669"/>
        <dbReference type="Rhea" id="RHEA-COMP:9703"/>
        <dbReference type="ChEBI" id="CHEBI:15378"/>
        <dbReference type="ChEBI" id="CHEBI:30616"/>
        <dbReference type="ChEBI" id="CHEBI:33019"/>
        <dbReference type="ChEBI" id="CHEBI:33384"/>
        <dbReference type="ChEBI" id="CHEBI:78442"/>
        <dbReference type="ChEBI" id="CHEBI:78533"/>
        <dbReference type="ChEBI" id="CHEBI:456215"/>
        <dbReference type="EC" id="6.1.1.11"/>
    </reaction>
</comment>
<comment type="catalytic activity">
    <reaction evidence="1">
        <text>tRNA(Sec) + L-serine + ATP = L-seryl-tRNA(Sec) + AMP + diphosphate + H(+)</text>
        <dbReference type="Rhea" id="RHEA:42580"/>
        <dbReference type="Rhea" id="RHEA-COMP:9742"/>
        <dbReference type="Rhea" id="RHEA-COMP:10128"/>
        <dbReference type="ChEBI" id="CHEBI:15378"/>
        <dbReference type="ChEBI" id="CHEBI:30616"/>
        <dbReference type="ChEBI" id="CHEBI:33019"/>
        <dbReference type="ChEBI" id="CHEBI:33384"/>
        <dbReference type="ChEBI" id="CHEBI:78442"/>
        <dbReference type="ChEBI" id="CHEBI:78533"/>
        <dbReference type="ChEBI" id="CHEBI:456215"/>
        <dbReference type="EC" id="6.1.1.11"/>
    </reaction>
</comment>
<comment type="pathway">
    <text evidence="1">Aminoacyl-tRNA biosynthesis; selenocysteinyl-tRNA(Sec) biosynthesis; L-seryl-tRNA(Sec) from L-serine and tRNA(Sec): step 1/1.</text>
</comment>
<comment type="subunit">
    <text evidence="1">Homodimer. The tRNA molecule binds across the dimer.</text>
</comment>
<comment type="subcellular location">
    <subcellularLocation>
        <location evidence="1">Cytoplasm</location>
    </subcellularLocation>
</comment>
<comment type="domain">
    <text evidence="1">Consists of two distinct domains, a catalytic core and a N-terminal extension that is involved in tRNA binding.</text>
</comment>
<comment type="similarity">
    <text evidence="1">Belongs to the class-II aminoacyl-tRNA synthetase family. Type-1 seryl-tRNA synthetase subfamily.</text>
</comment>
<evidence type="ECO:0000255" key="1">
    <source>
        <dbReference type="HAMAP-Rule" id="MF_00176"/>
    </source>
</evidence>
<gene>
    <name evidence="1" type="primary">serS</name>
    <name type="ordered locus">Noca_0174</name>
</gene>
<name>SYS_NOCSJ</name>